<dbReference type="EMBL" id="CR931997">
    <property type="protein sequence ID" value="CAI37280.1"/>
    <property type="molecule type" value="Genomic_DNA"/>
</dbReference>
<dbReference type="RefSeq" id="WP_011273662.1">
    <property type="nucleotide sequence ID" value="NC_007164.1"/>
</dbReference>
<dbReference type="SMR" id="Q4JV77"/>
<dbReference type="STRING" id="306537.jk1116"/>
<dbReference type="KEGG" id="cjk:jk1116"/>
<dbReference type="PATRIC" id="fig|306537.10.peg.1129"/>
<dbReference type="eggNOG" id="COG0468">
    <property type="taxonomic scope" value="Bacteria"/>
</dbReference>
<dbReference type="HOGENOM" id="CLU_040469_3_2_11"/>
<dbReference type="OrthoDB" id="9776733at2"/>
<dbReference type="Proteomes" id="UP000000545">
    <property type="component" value="Chromosome"/>
</dbReference>
<dbReference type="GO" id="GO:0005829">
    <property type="term" value="C:cytosol"/>
    <property type="evidence" value="ECO:0007669"/>
    <property type="project" value="TreeGrafter"/>
</dbReference>
<dbReference type="GO" id="GO:0005524">
    <property type="term" value="F:ATP binding"/>
    <property type="evidence" value="ECO:0007669"/>
    <property type="project" value="UniProtKB-UniRule"/>
</dbReference>
<dbReference type="GO" id="GO:0016887">
    <property type="term" value="F:ATP hydrolysis activity"/>
    <property type="evidence" value="ECO:0007669"/>
    <property type="project" value="InterPro"/>
</dbReference>
<dbReference type="GO" id="GO:0140664">
    <property type="term" value="F:ATP-dependent DNA damage sensor activity"/>
    <property type="evidence" value="ECO:0007669"/>
    <property type="project" value="InterPro"/>
</dbReference>
<dbReference type="GO" id="GO:0003684">
    <property type="term" value="F:damaged DNA binding"/>
    <property type="evidence" value="ECO:0007669"/>
    <property type="project" value="UniProtKB-UniRule"/>
</dbReference>
<dbReference type="GO" id="GO:0003697">
    <property type="term" value="F:single-stranded DNA binding"/>
    <property type="evidence" value="ECO:0007669"/>
    <property type="project" value="UniProtKB-UniRule"/>
</dbReference>
<dbReference type="GO" id="GO:0006310">
    <property type="term" value="P:DNA recombination"/>
    <property type="evidence" value="ECO:0007669"/>
    <property type="project" value="UniProtKB-UniRule"/>
</dbReference>
<dbReference type="GO" id="GO:0006281">
    <property type="term" value="P:DNA repair"/>
    <property type="evidence" value="ECO:0007669"/>
    <property type="project" value="UniProtKB-UniRule"/>
</dbReference>
<dbReference type="GO" id="GO:0009432">
    <property type="term" value="P:SOS response"/>
    <property type="evidence" value="ECO:0007669"/>
    <property type="project" value="UniProtKB-UniRule"/>
</dbReference>
<dbReference type="CDD" id="cd00983">
    <property type="entry name" value="RecA"/>
    <property type="match status" value="1"/>
</dbReference>
<dbReference type="FunFam" id="3.40.50.300:FF:000087">
    <property type="entry name" value="Recombinase RecA"/>
    <property type="match status" value="1"/>
</dbReference>
<dbReference type="Gene3D" id="3.40.50.300">
    <property type="entry name" value="P-loop containing nucleotide triphosphate hydrolases"/>
    <property type="match status" value="1"/>
</dbReference>
<dbReference type="HAMAP" id="MF_00268">
    <property type="entry name" value="RecA"/>
    <property type="match status" value="1"/>
</dbReference>
<dbReference type="InterPro" id="IPR003593">
    <property type="entry name" value="AAA+_ATPase"/>
</dbReference>
<dbReference type="InterPro" id="IPR013765">
    <property type="entry name" value="DNA_recomb/repair_RecA"/>
</dbReference>
<dbReference type="InterPro" id="IPR020584">
    <property type="entry name" value="DNA_recomb/repair_RecA_CS"/>
</dbReference>
<dbReference type="InterPro" id="IPR027417">
    <property type="entry name" value="P-loop_NTPase"/>
</dbReference>
<dbReference type="InterPro" id="IPR049261">
    <property type="entry name" value="RecA-like_C"/>
</dbReference>
<dbReference type="InterPro" id="IPR049428">
    <property type="entry name" value="RecA-like_N"/>
</dbReference>
<dbReference type="InterPro" id="IPR020588">
    <property type="entry name" value="RecA_ATP-bd"/>
</dbReference>
<dbReference type="InterPro" id="IPR023400">
    <property type="entry name" value="RecA_C_sf"/>
</dbReference>
<dbReference type="InterPro" id="IPR020587">
    <property type="entry name" value="RecA_monomer-monomer_interface"/>
</dbReference>
<dbReference type="NCBIfam" id="TIGR02012">
    <property type="entry name" value="tigrfam_recA"/>
    <property type="match status" value="1"/>
</dbReference>
<dbReference type="PANTHER" id="PTHR45900:SF1">
    <property type="entry name" value="MITOCHONDRIAL DNA REPAIR PROTEIN RECA HOMOLOG-RELATED"/>
    <property type="match status" value="1"/>
</dbReference>
<dbReference type="PANTHER" id="PTHR45900">
    <property type="entry name" value="RECA"/>
    <property type="match status" value="1"/>
</dbReference>
<dbReference type="Pfam" id="PF00154">
    <property type="entry name" value="RecA"/>
    <property type="match status" value="1"/>
</dbReference>
<dbReference type="Pfam" id="PF21096">
    <property type="entry name" value="RecA_C"/>
    <property type="match status" value="1"/>
</dbReference>
<dbReference type="PRINTS" id="PR00142">
    <property type="entry name" value="RECA"/>
</dbReference>
<dbReference type="SMART" id="SM00382">
    <property type="entry name" value="AAA"/>
    <property type="match status" value="1"/>
</dbReference>
<dbReference type="SUPFAM" id="SSF52540">
    <property type="entry name" value="P-loop containing nucleoside triphosphate hydrolases"/>
    <property type="match status" value="1"/>
</dbReference>
<dbReference type="SUPFAM" id="SSF54752">
    <property type="entry name" value="RecA protein, C-terminal domain"/>
    <property type="match status" value="1"/>
</dbReference>
<dbReference type="PROSITE" id="PS00321">
    <property type="entry name" value="RECA_1"/>
    <property type="match status" value="1"/>
</dbReference>
<dbReference type="PROSITE" id="PS50162">
    <property type="entry name" value="RECA_2"/>
    <property type="match status" value="1"/>
</dbReference>
<dbReference type="PROSITE" id="PS50163">
    <property type="entry name" value="RECA_3"/>
    <property type="match status" value="1"/>
</dbReference>
<organism>
    <name type="scientific">Corynebacterium jeikeium (strain K411)</name>
    <dbReference type="NCBI Taxonomy" id="306537"/>
    <lineage>
        <taxon>Bacteria</taxon>
        <taxon>Bacillati</taxon>
        <taxon>Actinomycetota</taxon>
        <taxon>Actinomycetes</taxon>
        <taxon>Mycobacteriales</taxon>
        <taxon>Corynebacteriaceae</taxon>
        <taxon>Corynebacterium</taxon>
    </lineage>
</organism>
<name>RECA_CORJK</name>
<comment type="function">
    <text evidence="1">Can catalyze the hydrolysis of ATP in the presence of single-stranded DNA, the ATP-dependent uptake of single-stranded DNA by duplex DNA, and the ATP-dependent hybridization of homologous single-stranded DNAs. It interacts with LexA causing its activation and leading to its autocatalytic cleavage.</text>
</comment>
<comment type="subcellular location">
    <subcellularLocation>
        <location evidence="1">Cytoplasm</location>
    </subcellularLocation>
</comment>
<comment type="similarity">
    <text evidence="1">Belongs to the RecA family.</text>
</comment>
<accession>Q4JV77</accession>
<evidence type="ECO:0000255" key="1">
    <source>
        <dbReference type="HAMAP-Rule" id="MF_00268"/>
    </source>
</evidence>
<evidence type="ECO:0000256" key="2">
    <source>
        <dbReference type="SAM" id="MobiDB-lite"/>
    </source>
</evidence>
<feature type="chain" id="PRO_0000122697" description="Protein RecA">
    <location>
        <begin position="1"/>
        <end position="375"/>
    </location>
</feature>
<feature type="region of interest" description="Disordered" evidence="2">
    <location>
        <begin position="339"/>
        <end position="375"/>
    </location>
</feature>
<feature type="compositionally biased region" description="Acidic residues" evidence="2">
    <location>
        <begin position="348"/>
        <end position="358"/>
    </location>
</feature>
<feature type="binding site" evidence="1">
    <location>
        <begin position="75"/>
        <end position="82"/>
    </location>
    <ligand>
        <name>ATP</name>
        <dbReference type="ChEBI" id="CHEBI:30616"/>
    </ligand>
</feature>
<gene>
    <name evidence="1" type="primary">recA</name>
    <name type="ordered locus">jk1116</name>
</gene>
<sequence>MPPKKKQTAAAGKDRSKALELAMAQIEKDFGKGAIMRLGDDTRPPIQAISSGNIAINAALGIGGFPRGRVVEIYGPESSGKTTVALHAIAEAQRAGGIAAFVDAEHALDPEYARALGVDTDALLVSQPDTGEQALEIADMLIRSGAIDIIVVDSVAALTPKAEIDGDMGDSHVGLQARLMSQALRKMTGALYQTGTTAIFINQLREKIGVMFGSPETTTGGKALKFYASVRCDIRRIQALKDGQDVVGNRTRLKVVKNKVSPPFKIAEFDILYGEGISREGSIIDLGVETGLIKKSGSWFTYDGDQLGQGKEKAREFLKNNRDLSAELEDRIARELKIGPYAKMKDEQTEEAAGDQMDEDKPIDLSPNFDDDDAN</sequence>
<protein>
    <recommendedName>
        <fullName evidence="1">Protein RecA</fullName>
    </recommendedName>
    <alternativeName>
        <fullName evidence="1">Recombinase A</fullName>
    </alternativeName>
</protein>
<keyword id="KW-0067">ATP-binding</keyword>
<keyword id="KW-0963">Cytoplasm</keyword>
<keyword id="KW-0227">DNA damage</keyword>
<keyword id="KW-0233">DNA recombination</keyword>
<keyword id="KW-0234">DNA repair</keyword>
<keyword id="KW-0238">DNA-binding</keyword>
<keyword id="KW-0547">Nucleotide-binding</keyword>
<keyword id="KW-1185">Reference proteome</keyword>
<keyword id="KW-0742">SOS response</keyword>
<proteinExistence type="inferred from homology"/>
<reference key="1">
    <citation type="journal article" date="2005" name="J. Bacteriol.">
        <title>Complete genome sequence and analysis of the multiresistant nosocomial pathogen Corynebacterium jeikeium K411, a lipid-requiring bacterium of the human skin flora.</title>
        <authorList>
            <person name="Tauch A."/>
            <person name="Kaiser O."/>
            <person name="Hain T."/>
            <person name="Goesmann A."/>
            <person name="Weisshaar B."/>
            <person name="Albersmeier A."/>
            <person name="Bekel T."/>
            <person name="Bischoff N."/>
            <person name="Brune I."/>
            <person name="Chakraborty T."/>
            <person name="Kalinowski J."/>
            <person name="Meyer F."/>
            <person name="Rupp O."/>
            <person name="Schneiker S."/>
            <person name="Viehoever P."/>
            <person name="Puehler A."/>
        </authorList>
    </citation>
    <scope>NUCLEOTIDE SEQUENCE [LARGE SCALE GENOMIC DNA]</scope>
    <source>
        <strain>K411</strain>
    </source>
</reference>